<organism>
    <name type="scientific">Desulforamulus reducens (strain ATCC BAA-1160 / DSM 100696 / MI-1)</name>
    <name type="common">Desulfotomaculum reducens</name>
    <dbReference type="NCBI Taxonomy" id="349161"/>
    <lineage>
        <taxon>Bacteria</taxon>
        <taxon>Bacillati</taxon>
        <taxon>Bacillota</taxon>
        <taxon>Clostridia</taxon>
        <taxon>Eubacteriales</taxon>
        <taxon>Peptococcaceae</taxon>
        <taxon>Desulforamulus</taxon>
    </lineage>
</organism>
<comment type="function">
    <text evidence="1">Catalyzes the folate-dependent formation of 5-methyl-uridine at position 54 (M-5-U54) in all tRNAs.</text>
</comment>
<comment type="catalytic activity">
    <reaction evidence="1">
        <text>uridine(54) in tRNA + (6R)-5,10-methylene-5,6,7,8-tetrahydrofolate + NADH + H(+) = 5-methyluridine(54) in tRNA + (6S)-5,6,7,8-tetrahydrofolate + NAD(+)</text>
        <dbReference type="Rhea" id="RHEA:16873"/>
        <dbReference type="Rhea" id="RHEA-COMP:10167"/>
        <dbReference type="Rhea" id="RHEA-COMP:10193"/>
        <dbReference type="ChEBI" id="CHEBI:15378"/>
        <dbReference type="ChEBI" id="CHEBI:15636"/>
        <dbReference type="ChEBI" id="CHEBI:57453"/>
        <dbReference type="ChEBI" id="CHEBI:57540"/>
        <dbReference type="ChEBI" id="CHEBI:57945"/>
        <dbReference type="ChEBI" id="CHEBI:65315"/>
        <dbReference type="ChEBI" id="CHEBI:74447"/>
        <dbReference type="EC" id="2.1.1.74"/>
    </reaction>
</comment>
<comment type="catalytic activity">
    <reaction evidence="1">
        <text>uridine(54) in tRNA + (6R)-5,10-methylene-5,6,7,8-tetrahydrofolate + NADPH + H(+) = 5-methyluridine(54) in tRNA + (6S)-5,6,7,8-tetrahydrofolate + NADP(+)</text>
        <dbReference type="Rhea" id="RHEA:62372"/>
        <dbReference type="Rhea" id="RHEA-COMP:10167"/>
        <dbReference type="Rhea" id="RHEA-COMP:10193"/>
        <dbReference type="ChEBI" id="CHEBI:15378"/>
        <dbReference type="ChEBI" id="CHEBI:15636"/>
        <dbReference type="ChEBI" id="CHEBI:57453"/>
        <dbReference type="ChEBI" id="CHEBI:57783"/>
        <dbReference type="ChEBI" id="CHEBI:58349"/>
        <dbReference type="ChEBI" id="CHEBI:65315"/>
        <dbReference type="ChEBI" id="CHEBI:74447"/>
        <dbReference type="EC" id="2.1.1.74"/>
    </reaction>
</comment>
<comment type="cofactor">
    <cofactor evidence="1">
        <name>FAD</name>
        <dbReference type="ChEBI" id="CHEBI:57692"/>
    </cofactor>
</comment>
<comment type="subcellular location">
    <subcellularLocation>
        <location evidence="1">Cytoplasm</location>
    </subcellularLocation>
</comment>
<comment type="similarity">
    <text evidence="1">Belongs to the MnmG family. TrmFO subfamily.</text>
</comment>
<keyword id="KW-0963">Cytoplasm</keyword>
<keyword id="KW-0274">FAD</keyword>
<keyword id="KW-0285">Flavoprotein</keyword>
<keyword id="KW-0489">Methyltransferase</keyword>
<keyword id="KW-0520">NAD</keyword>
<keyword id="KW-0521">NADP</keyword>
<keyword id="KW-1185">Reference proteome</keyword>
<keyword id="KW-0808">Transferase</keyword>
<keyword id="KW-0819">tRNA processing</keyword>
<sequence length="441" mass="49236">MTEHRVTVIGAGLAGSEAAWQLARRGIHVDLYEMRPQKYPPAHHTAYFSELVCSNSLRAAAIENAVGLLKEEMRQLDSLIISAADNHKVPAGGALAVDREGFSRYITETLEDHPLIDIHREEVTKIPEKGIVIVASGPLTSESLSHEIAKVTGEQYLYFYDAAAPIVTLESLDMTKVFRASRYGKGEEAYLNCPMDQDEYEKFYDALIHAERAPIKEFEKQVHFEGCMPVEVLASRGKDTLLYGPLKPVGLTDPRTGKRPHGVVQLRQDNAEGTLFNLVGFQTNLKWGEQKRVFSFIPGLEDAEFVRYGVMHRNTYITSPVLLQPTLQMKEHPRIFFAGQITGVEGYVESAAAGLIAGINAAALAKQKDLLIFPKETAHGALMHYITTASTKNFQPMNVTFGLFPELTVRLKGKRERGRAQAERALEILKEWIEKEKICDI</sequence>
<proteinExistence type="inferred from homology"/>
<accession>A4J5Z8</accession>
<dbReference type="EC" id="2.1.1.74" evidence="1"/>
<dbReference type="EMBL" id="CP000612">
    <property type="protein sequence ID" value="ABO50501.1"/>
    <property type="molecule type" value="Genomic_DNA"/>
</dbReference>
<dbReference type="RefSeq" id="WP_011878311.1">
    <property type="nucleotide sequence ID" value="NC_009253.1"/>
</dbReference>
<dbReference type="SMR" id="A4J5Z8"/>
<dbReference type="STRING" id="349161.Dred_1983"/>
<dbReference type="KEGG" id="drm:Dred_1983"/>
<dbReference type="eggNOG" id="COG1206">
    <property type="taxonomic scope" value="Bacteria"/>
</dbReference>
<dbReference type="HOGENOM" id="CLU_033057_1_0_9"/>
<dbReference type="OrthoDB" id="9803114at2"/>
<dbReference type="Proteomes" id="UP000001556">
    <property type="component" value="Chromosome"/>
</dbReference>
<dbReference type="GO" id="GO:0005829">
    <property type="term" value="C:cytosol"/>
    <property type="evidence" value="ECO:0007669"/>
    <property type="project" value="TreeGrafter"/>
</dbReference>
<dbReference type="GO" id="GO:0050660">
    <property type="term" value="F:flavin adenine dinucleotide binding"/>
    <property type="evidence" value="ECO:0007669"/>
    <property type="project" value="UniProtKB-UniRule"/>
</dbReference>
<dbReference type="GO" id="GO:0047151">
    <property type="term" value="F:tRNA (uracil(54)-C5)-methyltransferase activity, 5,10-methylenetetrahydrofolate-dependent"/>
    <property type="evidence" value="ECO:0007669"/>
    <property type="project" value="UniProtKB-UniRule"/>
</dbReference>
<dbReference type="GO" id="GO:0030488">
    <property type="term" value="P:tRNA methylation"/>
    <property type="evidence" value="ECO:0007669"/>
    <property type="project" value="TreeGrafter"/>
</dbReference>
<dbReference type="GO" id="GO:0002098">
    <property type="term" value="P:tRNA wobble uridine modification"/>
    <property type="evidence" value="ECO:0007669"/>
    <property type="project" value="TreeGrafter"/>
</dbReference>
<dbReference type="FunFam" id="3.50.50.60:FF:000035">
    <property type="entry name" value="Methylenetetrahydrofolate--tRNA-(uracil-5-)-methyltransferase TrmFO"/>
    <property type="match status" value="1"/>
</dbReference>
<dbReference type="FunFam" id="3.50.50.60:FF:000040">
    <property type="entry name" value="Methylenetetrahydrofolate--tRNA-(uracil-5-)-methyltransferase TrmFO"/>
    <property type="match status" value="1"/>
</dbReference>
<dbReference type="Gene3D" id="3.50.50.60">
    <property type="entry name" value="FAD/NAD(P)-binding domain"/>
    <property type="match status" value="2"/>
</dbReference>
<dbReference type="HAMAP" id="MF_01037">
    <property type="entry name" value="TrmFO"/>
    <property type="match status" value="1"/>
</dbReference>
<dbReference type="InterPro" id="IPR036188">
    <property type="entry name" value="FAD/NAD-bd_sf"/>
</dbReference>
<dbReference type="InterPro" id="IPR002218">
    <property type="entry name" value="MnmG-rel"/>
</dbReference>
<dbReference type="InterPro" id="IPR020595">
    <property type="entry name" value="MnmG-rel_CS"/>
</dbReference>
<dbReference type="InterPro" id="IPR040131">
    <property type="entry name" value="MnmG_N"/>
</dbReference>
<dbReference type="InterPro" id="IPR004417">
    <property type="entry name" value="TrmFO"/>
</dbReference>
<dbReference type="NCBIfam" id="TIGR00137">
    <property type="entry name" value="gid_trmFO"/>
    <property type="match status" value="1"/>
</dbReference>
<dbReference type="NCBIfam" id="NF003739">
    <property type="entry name" value="PRK05335.1"/>
    <property type="match status" value="1"/>
</dbReference>
<dbReference type="PANTHER" id="PTHR11806">
    <property type="entry name" value="GLUCOSE INHIBITED DIVISION PROTEIN A"/>
    <property type="match status" value="1"/>
</dbReference>
<dbReference type="PANTHER" id="PTHR11806:SF2">
    <property type="entry name" value="METHYLENETETRAHYDROFOLATE--TRNA-(URACIL-5-)-METHYLTRANSFERASE TRMFO"/>
    <property type="match status" value="1"/>
</dbReference>
<dbReference type="Pfam" id="PF01134">
    <property type="entry name" value="GIDA"/>
    <property type="match status" value="1"/>
</dbReference>
<dbReference type="SUPFAM" id="SSF51905">
    <property type="entry name" value="FAD/NAD(P)-binding domain"/>
    <property type="match status" value="1"/>
</dbReference>
<dbReference type="PROSITE" id="PS01281">
    <property type="entry name" value="GIDA_2"/>
    <property type="match status" value="1"/>
</dbReference>
<protein>
    <recommendedName>
        <fullName evidence="1">Methylenetetrahydrofolate--tRNA-(uracil-5-)-methyltransferase TrmFO</fullName>
        <ecNumber evidence="1">2.1.1.74</ecNumber>
    </recommendedName>
    <alternativeName>
        <fullName evidence="1">Folate-dependent tRNA (uracil-5-)-methyltransferase</fullName>
    </alternativeName>
    <alternativeName>
        <fullName evidence="1">Folate-dependent tRNA(M-5-U54)-methyltransferase</fullName>
    </alternativeName>
</protein>
<evidence type="ECO:0000255" key="1">
    <source>
        <dbReference type="HAMAP-Rule" id="MF_01037"/>
    </source>
</evidence>
<feature type="chain" id="PRO_1000084286" description="Methylenetetrahydrofolate--tRNA-(uracil-5-)-methyltransferase TrmFO">
    <location>
        <begin position="1"/>
        <end position="441"/>
    </location>
</feature>
<feature type="binding site" evidence="1">
    <location>
        <begin position="10"/>
        <end position="15"/>
    </location>
    <ligand>
        <name>FAD</name>
        <dbReference type="ChEBI" id="CHEBI:57692"/>
    </ligand>
</feature>
<name>TRMFO_DESRM</name>
<gene>
    <name evidence="1" type="primary">trmFO</name>
    <name type="synonym">gid</name>
    <name type="ordered locus">Dred_1983</name>
</gene>
<reference key="1">
    <citation type="submission" date="2007-03" db="EMBL/GenBank/DDBJ databases">
        <title>Complete sequence of Desulfotomaculum reducens MI-1.</title>
        <authorList>
            <consortium name="US DOE Joint Genome Institute"/>
            <person name="Copeland A."/>
            <person name="Lucas S."/>
            <person name="Lapidus A."/>
            <person name="Barry K."/>
            <person name="Detter J.C."/>
            <person name="Glavina del Rio T."/>
            <person name="Hammon N."/>
            <person name="Israni S."/>
            <person name="Dalin E."/>
            <person name="Tice H."/>
            <person name="Pitluck S."/>
            <person name="Sims D."/>
            <person name="Brettin T."/>
            <person name="Bruce D."/>
            <person name="Han C."/>
            <person name="Tapia R."/>
            <person name="Schmutz J."/>
            <person name="Larimer F."/>
            <person name="Land M."/>
            <person name="Hauser L."/>
            <person name="Kyrpides N."/>
            <person name="Kim E."/>
            <person name="Tebo B.M."/>
            <person name="Richardson P."/>
        </authorList>
    </citation>
    <scope>NUCLEOTIDE SEQUENCE [LARGE SCALE GENOMIC DNA]</scope>
    <source>
        <strain>ATCC BAA-1160 / DSM 100696 / MI-1</strain>
    </source>
</reference>